<dbReference type="EMBL" id="U00096">
    <property type="protein sequence ID" value="AAC74821.2"/>
    <property type="molecule type" value="Genomic_DNA"/>
</dbReference>
<dbReference type="EMBL" id="AP009048">
    <property type="protein sequence ID" value="BAE76518.1"/>
    <property type="molecule type" value="Genomic_DNA"/>
</dbReference>
<dbReference type="PIR" id="G64934">
    <property type="entry name" value="G64934"/>
</dbReference>
<dbReference type="RefSeq" id="NP_416265.4">
    <property type="nucleotide sequence ID" value="NC_000913.3"/>
</dbReference>
<dbReference type="RefSeq" id="WP_000939212.1">
    <property type="nucleotide sequence ID" value="NZ_SSZK01000001.1"/>
</dbReference>
<dbReference type="BioGRID" id="4260319">
    <property type="interactions" value="26"/>
</dbReference>
<dbReference type="FunCoup" id="P76220">
    <property type="interactions" value="1"/>
</dbReference>
<dbReference type="STRING" id="511145.b1751"/>
<dbReference type="jPOST" id="P76220"/>
<dbReference type="PaxDb" id="511145-b1751"/>
<dbReference type="EnsemblBacteria" id="AAC74821">
    <property type="protein sequence ID" value="AAC74821"/>
    <property type="gene ID" value="b1751"/>
</dbReference>
<dbReference type="GeneID" id="946248"/>
<dbReference type="KEGG" id="ecj:JW5283"/>
<dbReference type="KEGG" id="eco:b1751"/>
<dbReference type="KEGG" id="ecoc:C3026_10000"/>
<dbReference type="PATRIC" id="fig|511145.12.peg.1824"/>
<dbReference type="EchoBASE" id="EB3757"/>
<dbReference type="eggNOG" id="ENOG502Z95F">
    <property type="taxonomic scope" value="Bacteria"/>
</dbReference>
<dbReference type="HOGENOM" id="CLU_098233_1_0_6"/>
<dbReference type="InParanoid" id="P76220"/>
<dbReference type="OMA" id="RTMSQHY"/>
<dbReference type="OrthoDB" id="6571992at2"/>
<dbReference type="BioCyc" id="EcoCyc:G6946-MONOMER"/>
<dbReference type="PRO" id="PR:P76220"/>
<dbReference type="Proteomes" id="UP000000625">
    <property type="component" value="Chromosome"/>
</dbReference>
<dbReference type="GO" id="GO:0005829">
    <property type="term" value="C:cytosol"/>
    <property type="evidence" value="ECO:0000314"/>
    <property type="project" value="EcoCyc"/>
</dbReference>
<dbReference type="InterPro" id="IPR017896">
    <property type="entry name" value="4Fe4S_Fe-S-bd"/>
</dbReference>
<dbReference type="InterPro" id="IPR047750">
    <property type="entry name" value="YdjY-like"/>
</dbReference>
<dbReference type="NCBIfam" id="NF040466">
    <property type="entry name" value="ydjY_domain"/>
    <property type="match status" value="1"/>
</dbReference>
<dbReference type="PROSITE" id="PS51379">
    <property type="entry name" value="4FE4S_FER_2"/>
    <property type="match status" value="1"/>
</dbReference>
<sequence length="225" mass="24125">MLQHYSVSWKKGLAALCLLAVAGLSGCDQQENAAAKVEYDGLSNSQPLRVDANNHTVTMLVQINGRFLTDDTRHGIVFKDGSNGHKSLFMGYATPKAFYEALKEAGGTPGENMTMDNKETTHVTGSKLDISVNWQGAAKAYSFDEVIVDSNGKKLDMRFGGNLTAAEEKKTGCLVCLDSCPVGIVSNATYTYGAVEKRGEVKFKGNASVLPADNTLATVTFKIAE</sequence>
<evidence type="ECO:0000255" key="1"/>
<evidence type="ECO:0000255" key="2">
    <source>
        <dbReference type="PROSITE-ProRule" id="PRU00711"/>
    </source>
</evidence>
<proteinExistence type="inferred from homology"/>
<feature type="signal peptide" evidence="1">
    <location>
        <begin position="1"/>
        <end position="22"/>
    </location>
</feature>
<feature type="chain" id="PRO_0000013859" description="Uncharacterized protein YdjY">
    <location>
        <begin position="23"/>
        <end position="225"/>
    </location>
</feature>
<feature type="domain" description="4Fe-4S ferredoxin-type" evidence="2">
    <location>
        <begin position="161"/>
        <end position="190"/>
    </location>
</feature>
<reference key="1">
    <citation type="journal article" date="1997" name="Science">
        <title>The complete genome sequence of Escherichia coli K-12.</title>
        <authorList>
            <person name="Blattner F.R."/>
            <person name="Plunkett G. III"/>
            <person name="Bloch C.A."/>
            <person name="Perna N.T."/>
            <person name="Burland V."/>
            <person name="Riley M."/>
            <person name="Collado-Vides J."/>
            <person name="Glasner J.D."/>
            <person name="Rode C.K."/>
            <person name="Mayhew G.F."/>
            <person name="Gregor J."/>
            <person name="Davis N.W."/>
            <person name="Kirkpatrick H.A."/>
            <person name="Goeden M.A."/>
            <person name="Rose D.J."/>
            <person name="Mau B."/>
            <person name="Shao Y."/>
        </authorList>
    </citation>
    <scope>NUCLEOTIDE SEQUENCE [LARGE SCALE GENOMIC DNA]</scope>
    <source>
        <strain>K12 / MG1655 / ATCC 47076</strain>
    </source>
</reference>
<reference key="2">
    <citation type="journal article" date="2006" name="Mol. Syst. Biol.">
        <title>Highly accurate genome sequences of Escherichia coli K-12 strains MG1655 and W3110.</title>
        <authorList>
            <person name="Hayashi K."/>
            <person name="Morooka N."/>
            <person name="Yamamoto Y."/>
            <person name="Fujita K."/>
            <person name="Isono K."/>
            <person name="Choi S."/>
            <person name="Ohtsubo E."/>
            <person name="Baba T."/>
            <person name="Wanner B.L."/>
            <person name="Mori H."/>
            <person name="Horiuchi T."/>
        </authorList>
    </citation>
    <scope>NUCLEOTIDE SEQUENCE [LARGE SCALE GENOMIC DNA]</scope>
    <source>
        <strain>K12 / W3110 / ATCC 27325 / DSM 5911</strain>
    </source>
</reference>
<accession>P76220</accession>
<accession>Q2MB38</accession>
<keyword id="KW-1185">Reference proteome</keyword>
<keyword id="KW-0732">Signal</keyword>
<gene>
    <name type="primary">ydjY</name>
    <name type="ordered locus">b1751</name>
    <name type="ordered locus">JW5283</name>
</gene>
<organism>
    <name type="scientific">Escherichia coli (strain K12)</name>
    <dbReference type="NCBI Taxonomy" id="83333"/>
    <lineage>
        <taxon>Bacteria</taxon>
        <taxon>Pseudomonadati</taxon>
        <taxon>Pseudomonadota</taxon>
        <taxon>Gammaproteobacteria</taxon>
        <taxon>Enterobacterales</taxon>
        <taxon>Enterobacteriaceae</taxon>
        <taxon>Escherichia</taxon>
    </lineage>
</organism>
<name>YDJY_ECOLI</name>
<protein>
    <recommendedName>
        <fullName>Uncharacterized protein YdjY</fullName>
    </recommendedName>
</protein>